<reference key="1">
    <citation type="journal article" date="1996" name="Gene">
        <title>Sequencing of Comamonas testosteroni strain B-356-biphenyl/chlorobiphenyl dioxygenase genes: evolutionary relationships among Gram-negative bacterial biphenyl dioxygenases.</title>
        <authorList>
            <person name="Sylvestre M."/>
            <person name="Sirois M."/>
            <person name="Hurtubise Y."/>
            <person name="Bergeron J."/>
            <person name="Ahmad D."/>
            <person name="Shareck F."/>
            <person name="Barriault D."/>
            <person name="Guillemette I."/>
            <person name="Juteau J.-M."/>
        </authorList>
    </citation>
    <scope>NUCLEOTIDE SEQUENCE [GENOMIC DNA]</scope>
    <source>
        <strain>B-356</strain>
    </source>
</reference>
<accession>Q46372</accession>
<protein>
    <recommendedName>
        <fullName>Biphenyl dioxygenase subunit alpha</fullName>
        <ecNumber>1.14.12.18</ecNumber>
    </recommendedName>
    <alternativeName>
        <fullName>Biphenyl 2,3-dioxygenase</fullName>
    </alternativeName>
</protein>
<proteinExistence type="evidence at protein level"/>
<name>BPHA_COMTE</name>
<comment type="catalytic activity">
    <reaction>
        <text>biphenyl + NADH + O2 + H(+) = (2R,3S)-3-phenylcyclohexa-3,5-diene-1,2-diol + NAD(+)</text>
        <dbReference type="Rhea" id="RHEA:18165"/>
        <dbReference type="ChEBI" id="CHEBI:15378"/>
        <dbReference type="ChEBI" id="CHEBI:15379"/>
        <dbReference type="ChEBI" id="CHEBI:17097"/>
        <dbReference type="ChEBI" id="CHEBI:32922"/>
        <dbReference type="ChEBI" id="CHEBI:57540"/>
        <dbReference type="ChEBI" id="CHEBI:57945"/>
        <dbReference type="EC" id="1.14.12.18"/>
    </reaction>
</comment>
<comment type="cofactor">
    <cofactor evidence="2">
        <name>[2Fe-2S] cluster</name>
        <dbReference type="ChEBI" id="CHEBI:190135"/>
    </cofactor>
    <text evidence="2">Binds 1 [2Fe-2S] cluster per subunit.</text>
</comment>
<comment type="cofactor">
    <cofactor evidence="1">
        <name>Fe cation</name>
        <dbReference type="ChEBI" id="CHEBI:24875"/>
    </cofactor>
    <text evidence="1">Binds 1 Fe cation per subunit.</text>
</comment>
<comment type="pathway">
    <text>Xenobiotic degradation; biphenyl degradation; 2-hydroxy-2,4-pentadienoate and benzoate from biphenyl: step 1/4.</text>
</comment>
<comment type="subunit">
    <text evidence="1">Heterohexamer consisting of three BphA subunits and three BphE subunits. A ferredoxin (BphF) and a ferredoxin reductase (BphG) must be present to obtain activity (By similarity).</text>
</comment>
<comment type="similarity">
    <text evidence="3">Belongs to the bacterial ring-hydroxylating dioxygenase alpha subunit family.</text>
</comment>
<gene>
    <name type="primary">bphA</name>
</gene>
<organism>
    <name type="scientific">Comamonas testosteroni</name>
    <name type="common">Pseudomonas testosteroni</name>
    <dbReference type="NCBI Taxonomy" id="285"/>
    <lineage>
        <taxon>Bacteria</taxon>
        <taxon>Pseudomonadati</taxon>
        <taxon>Pseudomonadota</taxon>
        <taxon>Betaproteobacteria</taxon>
        <taxon>Burkholderiales</taxon>
        <taxon>Comamonadaceae</taxon>
        <taxon>Comamonas</taxon>
    </lineage>
</organism>
<feature type="chain" id="PRO_0000085047" description="Biphenyl dioxygenase subunit alpha">
    <location>
        <begin position="1"/>
        <end position="457"/>
    </location>
</feature>
<feature type="domain" description="Rieske" evidence="2">
    <location>
        <begin position="58"/>
        <end position="174"/>
    </location>
</feature>
<feature type="binding site" evidence="2">
    <location>
        <position position="100"/>
    </location>
    <ligand>
        <name>[2Fe-2S] cluster</name>
        <dbReference type="ChEBI" id="CHEBI:190135"/>
    </ligand>
</feature>
<feature type="binding site" evidence="2">
    <location>
        <position position="102"/>
    </location>
    <ligand>
        <name>[2Fe-2S] cluster</name>
        <dbReference type="ChEBI" id="CHEBI:190135"/>
    </ligand>
</feature>
<feature type="binding site" evidence="2">
    <location>
        <position position="120"/>
    </location>
    <ligand>
        <name>[2Fe-2S] cluster</name>
        <dbReference type="ChEBI" id="CHEBI:190135"/>
    </ligand>
</feature>
<feature type="binding site" evidence="2">
    <location>
        <position position="123"/>
    </location>
    <ligand>
        <name>[2Fe-2S] cluster</name>
        <dbReference type="ChEBI" id="CHEBI:190135"/>
    </ligand>
</feature>
<feature type="binding site" evidence="1">
    <location>
        <position position="233"/>
    </location>
    <ligand>
        <name>Fe cation</name>
        <dbReference type="ChEBI" id="CHEBI:24875"/>
    </ligand>
</feature>
<feature type="binding site" evidence="1">
    <location>
        <position position="239"/>
    </location>
    <ligand>
        <name>Fe cation</name>
        <dbReference type="ChEBI" id="CHEBI:24875"/>
    </ligand>
</feature>
<feature type="helix" evidence="4">
    <location>
        <begin position="21"/>
        <end position="25"/>
    </location>
</feature>
<feature type="turn" evidence="4">
    <location>
        <begin position="30"/>
        <end position="33"/>
    </location>
</feature>
<feature type="strand" evidence="4">
    <location>
        <begin position="34"/>
        <end position="36"/>
    </location>
</feature>
<feature type="helix" evidence="4">
    <location>
        <begin position="37"/>
        <end position="40"/>
    </location>
</feature>
<feature type="helix" evidence="4">
    <location>
        <begin position="43"/>
        <end position="52"/>
    </location>
</feature>
<feature type="turn" evidence="4">
    <location>
        <begin position="53"/>
        <end position="56"/>
    </location>
</feature>
<feature type="strand" evidence="4">
    <location>
        <begin position="59"/>
        <end position="63"/>
    </location>
</feature>
<feature type="helix" evidence="4">
    <location>
        <begin position="64"/>
        <end position="66"/>
    </location>
</feature>
<feature type="strand" evidence="4">
    <location>
        <begin position="72"/>
        <end position="78"/>
    </location>
</feature>
<feature type="strand" evidence="4">
    <location>
        <begin position="81"/>
        <end position="87"/>
    </location>
</feature>
<feature type="strand" evidence="4">
    <location>
        <begin position="93"/>
        <end position="98"/>
    </location>
</feature>
<feature type="turn" evidence="4">
    <location>
        <begin position="101"/>
        <end position="103"/>
    </location>
</feature>
<feature type="strand" evidence="4">
    <location>
        <begin position="110"/>
        <end position="114"/>
    </location>
</feature>
<feature type="strand" evidence="4">
    <location>
        <begin position="116"/>
        <end position="119"/>
    </location>
</feature>
<feature type="turn" evidence="4">
    <location>
        <begin position="121"/>
        <end position="123"/>
    </location>
</feature>
<feature type="strand" evidence="4">
    <location>
        <begin position="126"/>
        <end position="128"/>
    </location>
</feature>
<feature type="strand" evidence="4">
    <location>
        <begin position="133"/>
        <end position="135"/>
    </location>
</feature>
<feature type="helix" evidence="4">
    <location>
        <begin position="139"/>
        <end position="142"/>
    </location>
</feature>
<feature type="strand" evidence="4">
    <location>
        <begin position="145"/>
        <end position="147"/>
    </location>
</feature>
<feature type="turn" evidence="4">
    <location>
        <begin position="148"/>
        <end position="151"/>
    </location>
</feature>
<feature type="helix" evidence="4">
    <location>
        <begin position="155"/>
        <end position="157"/>
    </location>
</feature>
<feature type="strand" evidence="4">
    <location>
        <begin position="162"/>
        <end position="168"/>
    </location>
</feature>
<feature type="strand" evidence="4">
    <location>
        <begin position="171"/>
        <end position="176"/>
    </location>
</feature>
<feature type="helix" evidence="4">
    <location>
        <begin position="183"/>
        <end position="186"/>
    </location>
</feature>
<feature type="turn" evidence="4">
    <location>
        <begin position="187"/>
        <end position="189"/>
    </location>
</feature>
<feature type="helix" evidence="4">
    <location>
        <begin position="191"/>
        <end position="198"/>
    </location>
</feature>
<feature type="strand" evidence="4">
    <location>
        <begin position="199"/>
        <end position="201"/>
    </location>
</feature>
<feature type="strand" evidence="4">
    <location>
        <begin position="205"/>
        <end position="207"/>
    </location>
</feature>
<feature type="strand" evidence="4">
    <location>
        <begin position="212"/>
        <end position="218"/>
    </location>
</feature>
<feature type="helix" evidence="4">
    <location>
        <begin position="220"/>
        <end position="229"/>
    </location>
</feature>
<feature type="turn" evidence="4">
    <location>
        <begin position="232"/>
        <end position="239"/>
    </location>
</feature>
<feature type="helix" evidence="4">
    <location>
        <begin position="240"/>
        <end position="245"/>
    </location>
</feature>
<feature type="turn" evidence="4">
    <location>
        <begin position="253"/>
        <end position="255"/>
    </location>
</feature>
<feature type="strand" evidence="4">
    <location>
        <begin position="262"/>
        <end position="266"/>
    </location>
</feature>
<feature type="strand" evidence="4">
    <location>
        <begin position="268"/>
        <end position="271"/>
    </location>
</feature>
<feature type="strand" evidence="4">
    <location>
        <begin position="273"/>
        <end position="279"/>
    </location>
</feature>
<feature type="helix" evidence="4">
    <location>
        <begin position="282"/>
        <end position="297"/>
    </location>
</feature>
<feature type="helix" evidence="4">
    <location>
        <begin position="300"/>
        <end position="308"/>
    </location>
</feature>
<feature type="helix" evidence="4">
    <location>
        <begin position="314"/>
        <end position="316"/>
    </location>
</feature>
<feature type="strand" evidence="4">
    <location>
        <begin position="317"/>
        <end position="324"/>
    </location>
</feature>
<feature type="turn" evidence="4">
    <location>
        <begin position="325"/>
        <end position="327"/>
    </location>
</feature>
<feature type="strand" evidence="4">
    <location>
        <begin position="328"/>
        <end position="330"/>
    </location>
</feature>
<feature type="turn" evidence="4">
    <location>
        <begin position="332"/>
        <end position="334"/>
    </location>
</feature>
<feature type="strand" evidence="4">
    <location>
        <begin position="336"/>
        <end position="342"/>
    </location>
</feature>
<feature type="strand" evidence="4">
    <location>
        <begin position="348"/>
        <end position="357"/>
    </location>
</feature>
<feature type="helix" evidence="4">
    <location>
        <begin position="362"/>
        <end position="375"/>
    </location>
</feature>
<feature type="helix" evidence="4">
    <location>
        <begin position="383"/>
        <end position="396"/>
    </location>
</feature>
<feature type="helix" evidence="4">
    <location>
        <begin position="402"/>
        <end position="404"/>
    </location>
</feature>
<feature type="strand" evidence="4">
    <location>
        <begin position="406"/>
        <end position="408"/>
    </location>
</feature>
<feature type="turn" evidence="4">
    <location>
        <begin position="411"/>
        <end position="414"/>
    </location>
</feature>
<feature type="strand" evidence="4">
    <location>
        <begin position="423"/>
        <end position="431"/>
    </location>
</feature>
<feature type="helix" evidence="4">
    <location>
        <begin position="434"/>
        <end position="448"/>
    </location>
</feature>
<feature type="helix" evidence="4">
    <location>
        <begin position="452"/>
        <end position="455"/>
    </location>
</feature>
<keyword id="KW-0001">2Fe-2S</keyword>
<keyword id="KW-0002">3D-structure</keyword>
<keyword id="KW-0058">Aromatic hydrocarbons catabolism</keyword>
<keyword id="KW-0223">Dioxygenase</keyword>
<keyword id="KW-0408">Iron</keyword>
<keyword id="KW-0411">Iron-sulfur</keyword>
<keyword id="KW-0479">Metal-binding</keyword>
<keyword id="KW-0520">NAD</keyword>
<keyword id="KW-0560">Oxidoreductase</keyword>
<sequence length="457" mass="51692">MSSTMKDTQEAPVRWSRNWTPDAIRALVDQDNGKLDARIYADQDLYQLELERVFGRSWLMLGHETHIPKIGDYLTTYMGEDPVIMVRQKDQSIKVFLNQCRHRGMRIVRSDGGNAKAFTCTYHGWAYDIAGNLVNVPFEKEAFCDKKEGDCGFDKADWGPLQARVETYKGLVFANWDPEAPDLKTYLSDAMPYMDVMLDRTEAGTEAIGGIQKWVIPCNWKFAAEQFCSDMYHAGTMSHLSGVLAGLPPEMDLTQIQLSKNGNQFRSAWGGHGAGWFINDSSILLSVVGPKITQYWTQGPAAEKAARRVPQLPILDMFGQHMTVFPTCSFLPGINTIRTWHPRGPNEVEVWAFVLVDADAPEDIKEEFRLQNIRTFNAGGVFEQDDGENWVEIQRVMRGHKAKSTSLCAKMGLNVPNKNNPAYPGKTAYVYAEEAARGMYHHWSRMMSEPSWDTLKP</sequence>
<evidence type="ECO:0000250" key="1"/>
<evidence type="ECO:0000255" key="2">
    <source>
        <dbReference type="PROSITE-ProRule" id="PRU00628"/>
    </source>
</evidence>
<evidence type="ECO:0000305" key="3"/>
<evidence type="ECO:0007829" key="4">
    <source>
        <dbReference type="PDB" id="3GZX"/>
    </source>
</evidence>
<dbReference type="EC" id="1.14.12.18"/>
<dbReference type="EMBL" id="U47637">
    <property type="protein sequence ID" value="AAC44526.1"/>
    <property type="molecule type" value="Genomic_DNA"/>
</dbReference>
<dbReference type="PIR" id="JC4993">
    <property type="entry name" value="JC4993"/>
</dbReference>
<dbReference type="PDB" id="3GZX">
    <property type="method" value="X-ray"/>
    <property type="resolution" value="1.58 A"/>
    <property type="chains" value="A=1-457"/>
</dbReference>
<dbReference type="PDB" id="3GZY">
    <property type="method" value="X-ray"/>
    <property type="resolution" value="1.62 A"/>
    <property type="chains" value="A=1-457"/>
</dbReference>
<dbReference type="PDBsum" id="3GZX"/>
<dbReference type="PDBsum" id="3GZY"/>
<dbReference type="SMR" id="Q46372"/>
<dbReference type="BRENDA" id="1.14.12.18">
    <property type="organism ID" value="1590"/>
</dbReference>
<dbReference type="UniPathway" id="UPA00155">
    <property type="reaction ID" value="UER00250"/>
</dbReference>
<dbReference type="EvolutionaryTrace" id="Q46372"/>
<dbReference type="GO" id="GO:0051537">
    <property type="term" value="F:2 iron, 2 sulfur cluster binding"/>
    <property type="evidence" value="ECO:0007669"/>
    <property type="project" value="UniProtKB-KW"/>
</dbReference>
<dbReference type="GO" id="GO:0018687">
    <property type="term" value="F:biphenyl 2,3-dioxygenase activity"/>
    <property type="evidence" value="ECO:0007669"/>
    <property type="project" value="UniProtKB-EC"/>
</dbReference>
<dbReference type="GO" id="GO:0005506">
    <property type="term" value="F:iron ion binding"/>
    <property type="evidence" value="ECO:0007669"/>
    <property type="project" value="InterPro"/>
</dbReference>
<dbReference type="GO" id="GO:0009056">
    <property type="term" value="P:catabolic process"/>
    <property type="evidence" value="ECO:0007669"/>
    <property type="project" value="UniProtKB-KW"/>
</dbReference>
<dbReference type="CDD" id="cd08881">
    <property type="entry name" value="RHO_alpha_C_NDO-like"/>
    <property type="match status" value="1"/>
</dbReference>
<dbReference type="CDD" id="cd03472">
    <property type="entry name" value="Rieske_RO_Alpha_BPDO_like"/>
    <property type="match status" value="1"/>
</dbReference>
<dbReference type="Gene3D" id="3.90.380.10">
    <property type="entry name" value="Naphthalene 1,2-dioxygenase Alpha Subunit, Chain A, domain 1"/>
    <property type="match status" value="1"/>
</dbReference>
<dbReference type="Gene3D" id="2.102.10.10">
    <property type="entry name" value="Rieske [2Fe-2S] iron-sulphur domain"/>
    <property type="match status" value="1"/>
</dbReference>
<dbReference type="InterPro" id="IPR043266">
    <property type="entry name" value="RHO_NdoB-like_C"/>
</dbReference>
<dbReference type="InterPro" id="IPR017941">
    <property type="entry name" value="Rieske_2Fe-2S"/>
</dbReference>
<dbReference type="InterPro" id="IPR036922">
    <property type="entry name" value="Rieske_2Fe-2S_sf"/>
</dbReference>
<dbReference type="InterPro" id="IPR015881">
    <property type="entry name" value="Ring-hydroxy_dOase_2Fe2S_BS"/>
</dbReference>
<dbReference type="InterPro" id="IPR015879">
    <property type="entry name" value="Ring_hydroxy_dOase_asu_C_dom"/>
</dbReference>
<dbReference type="InterPro" id="IPR001663">
    <property type="entry name" value="Rng_hydr_dOase-A"/>
</dbReference>
<dbReference type="PANTHER" id="PTHR43756:SF1">
    <property type="entry name" value="3-PHENYLPROPIONATE_CINNAMIC ACID DIOXYGENASE SUBUNIT ALPHA"/>
    <property type="match status" value="1"/>
</dbReference>
<dbReference type="PANTHER" id="PTHR43756">
    <property type="entry name" value="CHOLINE MONOOXYGENASE, CHLOROPLASTIC"/>
    <property type="match status" value="1"/>
</dbReference>
<dbReference type="Pfam" id="PF00355">
    <property type="entry name" value="Rieske"/>
    <property type="match status" value="1"/>
</dbReference>
<dbReference type="Pfam" id="PF00848">
    <property type="entry name" value="Ring_hydroxyl_A"/>
    <property type="match status" value="1"/>
</dbReference>
<dbReference type="PRINTS" id="PR00090">
    <property type="entry name" value="RNGDIOXGNASE"/>
</dbReference>
<dbReference type="SUPFAM" id="SSF55961">
    <property type="entry name" value="Bet v1-like"/>
    <property type="match status" value="1"/>
</dbReference>
<dbReference type="SUPFAM" id="SSF50022">
    <property type="entry name" value="ISP domain"/>
    <property type="match status" value="1"/>
</dbReference>
<dbReference type="PROSITE" id="PS51296">
    <property type="entry name" value="RIESKE"/>
    <property type="match status" value="1"/>
</dbReference>
<dbReference type="PROSITE" id="PS00570">
    <property type="entry name" value="RING_HYDROXYL_ALPHA"/>
    <property type="match status" value="1"/>
</dbReference>